<gene>
    <name type="primary">PAB7</name>
    <name type="ordered locus">At2g36660</name>
    <name type="ORF">F13K3.6</name>
</gene>
<name>PABP7_ARATH</name>
<evidence type="ECO:0000250" key="1"/>
<evidence type="ECO:0000255" key="2">
    <source>
        <dbReference type="PROSITE-ProRule" id="PRU00176"/>
    </source>
</evidence>
<evidence type="ECO:0000255" key="3">
    <source>
        <dbReference type="PROSITE-ProRule" id="PRU00641"/>
    </source>
</evidence>
<evidence type="ECO:0000269" key="4">
    <source>
    </source>
</evidence>
<evidence type="ECO:0000305" key="5"/>
<sequence>MATVHAALHAADASSSGSSSPVTASLYVGDLHPSVTEGILYDAFAEFKSLTSVRLCKDASSGRSLCYGYANFLSRQDANLAIEKKNNSLLNGKMIRVMWSVRAPDARRNGVGNVFVKNLPESVTNAVLQDMFKKFGNIVSCKVATLEDGKSRGYGFVQFEQEDAAHAAIQTLNSTIVADKEIYVGKFMKKTDRVKPEEKYTNLYMKNLDADVSEDLLREKFAEFGKIVSLAIAKDENRLCRGYAFVNFDNPEDARRAAETVNGTKFGSKCLYVGRAQKKAEREQLLREQFKEKHEEQKMIAKVSNIYVKNVNVAVTEEELRKHFSQCGTITSTKLMCDEKGKSKGFGFVCFSTPEEAIDAVKTFHGQMFHGKPLYVAIAQKKEDRKMQLQVQFGNRVEARKSSSSASVNPGTYAPLYYTNTHPGMVYQSYPLMWKSANMIGSSYPNSEAVTYPPMVANAPSKNRQNRIGKLDRNAVSYVPNVYQSTQMLPLSRDFSKQQHSRTYGRGKEMKKSIQQRQSETVGMEMQLLGELLHPLVEKLEPQLANKITGMLLEMDKSELLLLLKSPEDLAVRVDEAFEVLKSSKTNLTAPNTHRSDYLASGIAGVSIK</sequence>
<accession>Q9ZQA8</accession>
<protein>
    <recommendedName>
        <fullName>Polyadenylate-binding protein 7</fullName>
        <shortName>PABP-7</shortName>
        <shortName>Poly(A)-binding protein 7</shortName>
    </recommendedName>
</protein>
<dbReference type="EMBL" id="AC006282">
    <property type="protein sequence ID" value="AAD20142.1"/>
    <property type="molecule type" value="Genomic_DNA"/>
</dbReference>
<dbReference type="EMBL" id="CP002685">
    <property type="protein sequence ID" value="AEC09279.1"/>
    <property type="molecule type" value="Genomic_DNA"/>
</dbReference>
<dbReference type="EMBL" id="BX819570">
    <property type="status" value="NOT_ANNOTATED_CDS"/>
    <property type="molecule type" value="mRNA"/>
</dbReference>
<dbReference type="PIR" id="B84783">
    <property type="entry name" value="B84783"/>
</dbReference>
<dbReference type="RefSeq" id="NP_181204.1">
    <property type="nucleotide sequence ID" value="NM_129221.2"/>
</dbReference>
<dbReference type="SMR" id="Q9ZQA8"/>
<dbReference type="FunCoup" id="Q9ZQA8">
    <property type="interactions" value="112"/>
</dbReference>
<dbReference type="STRING" id="3702.Q9ZQA8"/>
<dbReference type="PaxDb" id="3702-AT2G36660.1"/>
<dbReference type="ProteomicsDB" id="248743"/>
<dbReference type="EnsemblPlants" id="AT2G36660.1">
    <property type="protein sequence ID" value="AT2G36660.1"/>
    <property type="gene ID" value="AT2G36660"/>
</dbReference>
<dbReference type="GeneID" id="818238"/>
<dbReference type="Gramene" id="AT2G36660.1">
    <property type="protein sequence ID" value="AT2G36660.1"/>
    <property type="gene ID" value="AT2G36660"/>
</dbReference>
<dbReference type="KEGG" id="ath:AT2G36660"/>
<dbReference type="Araport" id="AT2G36660"/>
<dbReference type="TAIR" id="AT2G36660">
    <property type="gene designation" value="PAB7"/>
</dbReference>
<dbReference type="eggNOG" id="KOG0123">
    <property type="taxonomic scope" value="Eukaryota"/>
</dbReference>
<dbReference type="HOGENOM" id="CLU_012062_22_4_1"/>
<dbReference type="InParanoid" id="Q9ZQA8"/>
<dbReference type="OMA" id="CKFGDIL"/>
<dbReference type="OrthoDB" id="19742at2759"/>
<dbReference type="PhylomeDB" id="Q9ZQA8"/>
<dbReference type="PRO" id="PR:Q9ZQA8"/>
<dbReference type="Proteomes" id="UP000006548">
    <property type="component" value="Chromosome 2"/>
</dbReference>
<dbReference type="ExpressionAtlas" id="Q9ZQA8">
    <property type="expression patterns" value="baseline and differential"/>
</dbReference>
<dbReference type="GO" id="GO:0005737">
    <property type="term" value="C:cytoplasm"/>
    <property type="evidence" value="ECO:0007669"/>
    <property type="project" value="UniProtKB-SubCell"/>
</dbReference>
<dbReference type="GO" id="GO:0005634">
    <property type="term" value="C:nucleus"/>
    <property type="evidence" value="ECO:0007669"/>
    <property type="project" value="UniProtKB-SubCell"/>
</dbReference>
<dbReference type="GO" id="GO:0003723">
    <property type="term" value="F:RNA binding"/>
    <property type="evidence" value="ECO:0007669"/>
    <property type="project" value="UniProtKB-KW"/>
</dbReference>
<dbReference type="GO" id="GO:0006417">
    <property type="term" value="P:regulation of translation"/>
    <property type="evidence" value="ECO:0007669"/>
    <property type="project" value="UniProtKB-KW"/>
</dbReference>
<dbReference type="CDD" id="cd12379">
    <property type="entry name" value="RRM2_I_PABPs"/>
    <property type="match status" value="1"/>
</dbReference>
<dbReference type="CDD" id="cd12381">
    <property type="entry name" value="RRM4_I_PABPs"/>
    <property type="match status" value="1"/>
</dbReference>
<dbReference type="FunFam" id="3.30.70.330:FF:000003">
    <property type="entry name" value="Polyadenylate-binding protein"/>
    <property type="match status" value="1"/>
</dbReference>
<dbReference type="FunFam" id="3.30.70.330:FF:000499">
    <property type="entry name" value="Polyadenylate-binding protein"/>
    <property type="match status" value="1"/>
</dbReference>
<dbReference type="FunFam" id="3.30.70.330:FF:000500">
    <property type="entry name" value="Polyadenylate-binding protein"/>
    <property type="match status" value="1"/>
</dbReference>
<dbReference type="FunFam" id="3.30.70.330:FF:000782">
    <property type="entry name" value="Polyadenylate-binding protein"/>
    <property type="match status" value="1"/>
</dbReference>
<dbReference type="FunFam" id="1.10.1900.10:FF:000018">
    <property type="entry name" value="Polyadenylate-binding protein 7"/>
    <property type="match status" value="1"/>
</dbReference>
<dbReference type="Gene3D" id="3.30.70.330">
    <property type="match status" value="4"/>
</dbReference>
<dbReference type="Gene3D" id="1.10.1900.10">
    <property type="entry name" value="c-terminal domain of poly(a) binding protein"/>
    <property type="match status" value="1"/>
</dbReference>
<dbReference type="InterPro" id="IPR012677">
    <property type="entry name" value="Nucleotide-bd_a/b_plait_sf"/>
</dbReference>
<dbReference type="InterPro" id="IPR036053">
    <property type="entry name" value="PABP-dom"/>
</dbReference>
<dbReference type="InterPro" id="IPR006515">
    <property type="entry name" value="PABP_1234"/>
</dbReference>
<dbReference type="InterPro" id="IPR002004">
    <property type="entry name" value="PABP_HYD_C"/>
</dbReference>
<dbReference type="InterPro" id="IPR035979">
    <property type="entry name" value="RBD_domain_sf"/>
</dbReference>
<dbReference type="InterPro" id="IPR045305">
    <property type="entry name" value="RRM2_I_PABPs"/>
</dbReference>
<dbReference type="InterPro" id="IPR000504">
    <property type="entry name" value="RRM_dom"/>
</dbReference>
<dbReference type="InterPro" id="IPR003954">
    <property type="entry name" value="RRM_dom_euk"/>
</dbReference>
<dbReference type="NCBIfam" id="TIGR01628">
    <property type="entry name" value="PABP-1234"/>
    <property type="match status" value="1"/>
</dbReference>
<dbReference type="PANTHER" id="PTHR24012">
    <property type="entry name" value="RNA BINDING PROTEIN"/>
    <property type="match status" value="1"/>
</dbReference>
<dbReference type="Pfam" id="PF00658">
    <property type="entry name" value="MLLE"/>
    <property type="match status" value="1"/>
</dbReference>
<dbReference type="Pfam" id="PF00076">
    <property type="entry name" value="RRM_1"/>
    <property type="match status" value="4"/>
</dbReference>
<dbReference type="SMART" id="SM00517">
    <property type="entry name" value="PolyA"/>
    <property type="match status" value="1"/>
</dbReference>
<dbReference type="SMART" id="SM00360">
    <property type="entry name" value="RRM"/>
    <property type="match status" value="4"/>
</dbReference>
<dbReference type="SMART" id="SM00361">
    <property type="entry name" value="RRM_1"/>
    <property type="match status" value="3"/>
</dbReference>
<dbReference type="SUPFAM" id="SSF63570">
    <property type="entry name" value="PABC (PABP) domain"/>
    <property type="match status" value="1"/>
</dbReference>
<dbReference type="SUPFAM" id="SSF54928">
    <property type="entry name" value="RNA-binding domain, RBD"/>
    <property type="match status" value="3"/>
</dbReference>
<dbReference type="PROSITE" id="PS51309">
    <property type="entry name" value="PABC"/>
    <property type="match status" value="1"/>
</dbReference>
<dbReference type="PROSITE" id="PS50102">
    <property type="entry name" value="RRM"/>
    <property type="match status" value="4"/>
</dbReference>
<proteinExistence type="evidence at transcript level"/>
<comment type="function">
    <text evidence="1">Binds the poly(A) tail of mRNA. Appears to be an important mediator of the multiple roles of the poly(A) tail in mRNA biogenesis, stability and translation (By similarity).</text>
</comment>
<comment type="subcellular location">
    <subcellularLocation>
        <location evidence="1">Cytoplasm</location>
    </subcellularLocation>
    <subcellularLocation>
        <location evidence="1">Nucleus</location>
    </subcellularLocation>
</comment>
<comment type="tissue specificity">
    <text evidence="4">Expressed predominantly in siliques.</text>
</comment>
<comment type="miscellaneous">
    <text>A.thaliana contains 8 PABP genes.</text>
</comment>
<comment type="similarity">
    <text evidence="5">Belongs to the polyadenylate-binding protein type-1 family.</text>
</comment>
<comment type="sequence caution" evidence="5">
    <conflict type="erroneous termination">
        <sequence resource="EMBL" id="BX819570"/>
    </conflict>
    <text>Truncated C-terminus.</text>
</comment>
<reference key="1">
    <citation type="journal article" date="1999" name="Nature">
        <title>Sequence and analysis of chromosome 2 of the plant Arabidopsis thaliana.</title>
        <authorList>
            <person name="Lin X."/>
            <person name="Kaul S."/>
            <person name="Rounsley S.D."/>
            <person name="Shea T.P."/>
            <person name="Benito M.-I."/>
            <person name="Town C.D."/>
            <person name="Fujii C.Y."/>
            <person name="Mason T.M."/>
            <person name="Bowman C.L."/>
            <person name="Barnstead M.E."/>
            <person name="Feldblyum T.V."/>
            <person name="Buell C.R."/>
            <person name="Ketchum K.A."/>
            <person name="Lee J.J."/>
            <person name="Ronning C.M."/>
            <person name="Koo H.L."/>
            <person name="Moffat K.S."/>
            <person name="Cronin L.A."/>
            <person name="Shen M."/>
            <person name="Pai G."/>
            <person name="Van Aken S."/>
            <person name="Umayam L."/>
            <person name="Tallon L.J."/>
            <person name="Gill J.E."/>
            <person name="Adams M.D."/>
            <person name="Carrera A.J."/>
            <person name="Creasy T.H."/>
            <person name="Goodman H.M."/>
            <person name="Somerville C.R."/>
            <person name="Copenhaver G.P."/>
            <person name="Preuss D."/>
            <person name="Nierman W.C."/>
            <person name="White O."/>
            <person name="Eisen J.A."/>
            <person name="Salzberg S.L."/>
            <person name="Fraser C.M."/>
            <person name="Venter J.C."/>
        </authorList>
    </citation>
    <scope>NUCLEOTIDE SEQUENCE [LARGE SCALE GENOMIC DNA]</scope>
    <source>
        <strain>cv. Columbia</strain>
    </source>
</reference>
<reference key="2">
    <citation type="journal article" date="2017" name="Plant J.">
        <title>Araport11: a complete reannotation of the Arabidopsis thaliana reference genome.</title>
        <authorList>
            <person name="Cheng C.Y."/>
            <person name="Krishnakumar V."/>
            <person name="Chan A.P."/>
            <person name="Thibaud-Nissen F."/>
            <person name="Schobel S."/>
            <person name="Town C.D."/>
        </authorList>
    </citation>
    <scope>GENOME REANNOTATION</scope>
    <source>
        <strain>cv. Columbia</strain>
    </source>
</reference>
<reference key="3">
    <citation type="journal article" date="2004" name="Genome Res.">
        <title>Whole genome sequence comparisons and 'full-length' cDNA sequences: a combined approach to evaluate and improve Arabidopsis genome annotation.</title>
        <authorList>
            <person name="Castelli V."/>
            <person name="Aury J.-M."/>
            <person name="Jaillon O."/>
            <person name="Wincker P."/>
            <person name="Clepet C."/>
            <person name="Menard M."/>
            <person name="Cruaud C."/>
            <person name="Quetier F."/>
            <person name="Scarpelli C."/>
            <person name="Schaechter V."/>
            <person name="Temple G."/>
            <person name="Caboche M."/>
            <person name="Weissenbach J."/>
            <person name="Salanoubat M."/>
        </authorList>
    </citation>
    <scope>NUCLEOTIDE SEQUENCE [LARGE SCALE MRNA] OF 388-609</scope>
    <source>
        <strain>cv. Columbia</strain>
    </source>
</reference>
<reference key="4">
    <citation type="journal article" date="2003" name="Genetics">
        <title>Unexpected complexity of poly(A)-binding protein gene families in flowering plants: three conserved lineages that are at least 200 million years old and possible auto- and cross-regulation.</title>
        <authorList>
            <person name="Belostotsky D.A."/>
        </authorList>
    </citation>
    <scope>GENE FAMILY</scope>
    <scope>TISSUE SPECIFICITY</scope>
</reference>
<feature type="chain" id="PRO_0000081717" description="Polyadenylate-binding protein 7">
    <location>
        <begin position="1"/>
        <end position="609"/>
    </location>
</feature>
<feature type="domain" description="RRM 1" evidence="2">
    <location>
        <begin position="24"/>
        <end position="102"/>
    </location>
</feature>
<feature type="domain" description="RRM 2" evidence="2">
    <location>
        <begin position="112"/>
        <end position="189"/>
    </location>
</feature>
<feature type="domain" description="RRM 3" evidence="2">
    <location>
        <begin position="201"/>
        <end position="278"/>
    </location>
</feature>
<feature type="domain" description="RRM 4" evidence="2">
    <location>
        <begin position="304"/>
        <end position="381"/>
    </location>
</feature>
<feature type="domain" description="PABC" evidence="3">
    <location>
        <begin position="509"/>
        <end position="586"/>
    </location>
</feature>
<feature type="sequence conflict" description="In Ref. 3; BX819570." evidence="5" ref="3">
    <original>Q</original>
    <variation>E</variation>
    <location>
        <position position="484"/>
    </location>
</feature>
<feature type="sequence conflict" description="In Ref. 3; BX819570." evidence="5" ref="3">
    <original>K</original>
    <variation>T</variation>
    <location>
        <position position="497"/>
    </location>
</feature>
<feature type="sequence conflict" description="In Ref. 3; BX819570." evidence="5" ref="3">
    <original>Q</original>
    <variation>K</variation>
    <location>
        <position position="527"/>
    </location>
</feature>
<keyword id="KW-0963">Cytoplasm</keyword>
<keyword id="KW-0539">Nucleus</keyword>
<keyword id="KW-1185">Reference proteome</keyword>
<keyword id="KW-0677">Repeat</keyword>
<keyword id="KW-0694">RNA-binding</keyword>
<keyword id="KW-0810">Translation regulation</keyword>
<organism>
    <name type="scientific">Arabidopsis thaliana</name>
    <name type="common">Mouse-ear cress</name>
    <dbReference type="NCBI Taxonomy" id="3702"/>
    <lineage>
        <taxon>Eukaryota</taxon>
        <taxon>Viridiplantae</taxon>
        <taxon>Streptophyta</taxon>
        <taxon>Embryophyta</taxon>
        <taxon>Tracheophyta</taxon>
        <taxon>Spermatophyta</taxon>
        <taxon>Magnoliopsida</taxon>
        <taxon>eudicotyledons</taxon>
        <taxon>Gunneridae</taxon>
        <taxon>Pentapetalae</taxon>
        <taxon>rosids</taxon>
        <taxon>malvids</taxon>
        <taxon>Brassicales</taxon>
        <taxon>Brassicaceae</taxon>
        <taxon>Camelineae</taxon>
        <taxon>Arabidopsis</taxon>
    </lineage>
</organism>